<protein>
    <recommendedName>
        <fullName evidence="1">Probable porphobilinogen deaminase</fullName>
        <shortName evidence="1">PBG</shortName>
        <ecNumber evidence="1">2.5.1.61</ecNumber>
    </recommendedName>
    <alternativeName>
        <fullName evidence="1">Hydroxymethylbilane synthase</fullName>
        <shortName evidence="1">HMBS</shortName>
    </alternativeName>
    <alternativeName>
        <fullName evidence="1">Pre-uroporphyrinogen synthase</fullName>
    </alternativeName>
</protein>
<feature type="chain" id="PRO_0000304304" description="Probable porphobilinogen deaminase">
    <location>
        <begin position="1"/>
        <end position="296"/>
    </location>
</feature>
<feature type="modified residue" description="S-(dipyrrolylmethanemethyl)cysteine" evidence="1">
    <location>
        <position position="241"/>
    </location>
</feature>
<organism>
    <name type="scientific">Pyrobaculum calidifontis (strain DSM 21063 / JCM 11548 / VA1)</name>
    <dbReference type="NCBI Taxonomy" id="410359"/>
    <lineage>
        <taxon>Archaea</taxon>
        <taxon>Thermoproteota</taxon>
        <taxon>Thermoprotei</taxon>
        <taxon>Thermoproteales</taxon>
        <taxon>Thermoproteaceae</taxon>
        <taxon>Pyrobaculum</taxon>
    </lineage>
</organism>
<gene>
    <name evidence="1" type="primary">hemC</name>
    <name type="ordered locus">Pcal_1707</name>
</gene>
<reference key="1">
    <citation type="submission" date="2007-02" db="EMBL/GenBank/DDBJ databases">
        <title>Complete sequence of Pyrobaculum calidifontis JCM 11548.</title>
        <authorList>
            <consortium name="US DOE Joint Genome Institute"/>
            <person name="Copeland A."/>
            <person name="Lucas S."/>
            <person name="Lapidus A."/>
            <person name="Barry K."/>
            <person name="Glavina del Rio T."/>
            <person name="Dalin E."/>
            <person name="Tice H."/>
            <person name="Pitluck S."/>
            <person name="Chain P."/>
            <person name="Malfatti S."/>
            <person name="Shin M."/>
            <person name="Vergez L."/>
            <person name="Schmutz J."/>
            <person name="Larimer F."/>
            <person name="Land M."/>
            <person name="Hauser L."/>
            <person name="Kyrpides N."/>
            <person name="Mikhailova N."/>
            <person name="Cozen A.E."/>
            <person name="Fitz-Gibbon S.T."/>
            <person name="House C.H."/>
            <person name="Saltikov C."/>
            <person name="Lowe T.M."/>
            <person name="Richardson P."/>
        </authorList>
    </citation>
    <scope>NUCLEOTIDE SEQUENCE [LARGE SCALE GENOMIC DNA]</scope>
    <source>
        <strain>DSM 21063 / JCM 11548 / VA1</strain>
    </source>
</reference>
<keyword id="KW-0627">Porphyrin biosynthesis</keyword>
<keyword id="KW-0808">Transferase</keyword>
<proteinExistence type="inferred from homology"/>
<accession>A3MWV7</accession>
<evidence type="ECO:0000255" key="1">
    <source>
        <dbReference type="HAMAP-Rule" id="MF_00260"/>
    </source>
</evidence>
<name>HEM3_PYRCJ</name>
<comment type="function">
    <text evidence="1">Tetrapolymerization of the monopyrrole PBG into the hydroxymethylbilane pre-uroporphyrinogen in several discrete steps.</text>
</comment>
<comment type="catalytic activity">
    <reaction evidence="1">
        <text>4 porphobilinogen + H2O = hydroxymethylbilane + 4 NH4(+)</text>
        <dbReference type="Rhea" id="RHEA:13185"/>
        <dbReference type="ChEBI" id="CHEBI:15377"/>
        <dbReference type="ChEBI" id="CHEBI:28938"/>
        <dbReference type="ChEBI" id="CHEBI:57845"/>
        <dbReference type="ChEBI" id="CHEBI:58126"/>
        <dbReference type="EC" id="2.5.1.61"/>
    </reaction>
</comment>
<comment type="cofactor">
    <cofactor evidence="1">
        <name>dipyrromethane</name>
        <dbReference type="ChEBI" id="CHEBI:60342"/>
    </cofactor>
    <text evidence="1">Binds 1 dipyrromethane group covalently.</text>
</comment>
<comment type="pathway">
    <text evidence="1">Porphyrin-containing compound metabolism; protoporphyrin-IX biosynthesis; coproporphyrinogen-III from 5-aminolevulinate: step 2/4.</text>
</comment>
<comment type="miscellaneous">
    <text evidence="1">The porphobilinogen subunits are added to the dipyrromethane group.</text>
</comment>
<comment type="similarity">
    <text evidence="1">Belongs to the HMBS family.</text>
</comment>
<sequence>MKIRVATRGSKLSLLQTQELLDQVKAVEPKVEFELVVVKTTGDVVQDRPLYQIGVKGIFEKEVNLAVLRGEADVAVHSLKDLPSELTPGLVIAGFSRRAPPYDVVASREGYSLYTLPKGAVVGTSSVRRAEFLRAVRPDVEVRPLRGNVDTRVGKILSGQYDAAIMAMAGLVRLYGWEAPVKLSPIRPEEIPPPPGQGIVVAVVKEGEAWLIDILRRASDRRAAVEATAEREFLMHVGAGCHVAVGGLARYEDGGMSFVAGYASGGRRYVIKLWGEDPREVGRRAAEEIRKIREGD</sequence>
<dbReference type="EC" id="2.5.1.61" evidence="1"/>
<dbReference type="EMBL" id="CP000561">
    <property type="protein sequence ID" value="ABO09124.1"/>
    <property type="molecule type" value="Genomic_DNA"/>
</dbReference>
<dbReference type="RefSeq" id="WP_011850383.1">
    <property type="nucleotide sequence ID" value="NC_009073.1"/>
</dbReference>
<dbReference type="SMR" id="A3MWV7"/>
<dbReference type="STRING" id="410359.Pcal_1707"/>
<dbReference type="GeneID" id="4909016"/>
<dbReference type="KEGG" id="pcl:Pcal_1707"/>
<dbReference type="eggNOG" id="arCOG04299">
    <property type="taxonomic scope" value="Archaea"/>
</dbReference>
<dbReference type="HOGENOM" id="CLU_019704_0_2_2"/>
<dbReference type="OrthoDB" id="8042at2157"/>
<dbReference type="UniPathway" id="UPA00251">
    <property type="reaction ID" value="UER00319"/>
</dbReference>
<dbReference type="Proteomes" id="UP000001431">
    <property type="component" value="Chromosome"/>
</dbReference>
<dbReference type="GO" id="GO:0005737">
    <property type="term" value="C:cytoplasm"/>
    <property type="evidence" value="ECO:0007669"/>
    <property type="project" value="TreeGrafter"/>
</dbReference>
<dbReference type="GO" id="GO:0004418">
    <property type="term" value="F:hydroxymethylbilane synthase activity"/>
    <property type="evidence" value="ECO:0007669"/>
    <property type="project" value="UniProtKB-UniRule"/>
</dbReference>
<dbReference type="GO" id="GO:0006782">
    <property type="term" value="P:protoporphyrinogen IX biosynthetic process"/>
    <property type="evidence" value="ECO:0007669"/>
    <property type="project" value="UniProtKB-UniRule"/>
</dbReference>
<dbReference type="FunFam" id="3.40.190.10:FF:000005">
    <property type="entry name" value="Porphobilinogen deaminase"/>
    <property type="match status" value="1"/>
</dbReference>
<dbReference type="Gene3D" id="3.40.190.10">
    <property type="entry name" value="Periplasmic binding protein-like II"/>
    <property type="match status" value="2"/>
</dbReference>
<dbReference type="Gene3D" id="3.30.160.40">
    <property type="entry name" value="Porphobilinogen deaminase, C-terminal domain"/>
    <property type="match status" value="1"/>
</dbReference>
<dbReference type="HAMAP" id="MF_00260">
    <property type="entry name" value="Porphobil_deam"/>
    <property type="match status" value="1"/>
</dbReference>
<dbReference type="InterPro" id="IPR000860">
    <property type="entry name" value="HemC"/>
</dbReference>
<dbReference type="InterPro" id="IPR022419">
    <property type="entry name" value="Porphobilin_deaminase_cofac_BS"/>
</dbReference>
<dbReference type="InterPro" id="IPR022417">
    <property type="entry name" value="Porphobilin_deaminase_N"/>
</dbReference>
<dbReference type="InterPro" id="IPR022418">
    <property type="entry name" value="Porphobilinogen_deaminase_C"/>
</dbReference>
<dbReference type="InterPro" id="IPR036803">
    <property type="entry name" value="Porphobilinogen_deaminase_C_sf"/>
</dbReference>
<dbReference type="NCBIfam" id="TIGR00212">
    <property type="entry name" value="hemC"/>
    <property type="match status" value="1"/>
</dbReference>
<dbReference type="PANTHER" id="PTHR11557">
    <property type="entry name" value="PORPHOBILINOGEN DEAMINASE"/>
    <property type="match status" value="1"/>
</dbReference>
<dbReference type="PANTHER" id="PTHR11557:SF0">
    <property type="entry name" value="PORPHOBILINOGEN DEAMINASE"/>
    <property type="match status" value="1"/>
</dbReference>
<dbReference type="Pfam" id="PF01379">
    <property type="entry name" value="Porphobil_deam"/>
    <property type="match status" value="1"/>
</dbReference>
<dbReference type="Pfam" id="PF03900">
    <property type="entry name" value="Porphobil_deamC"/>
    <property type="match status" value="1"/>
</dbReference>
<dbReference type="PIRSF" id="PIRSF001438">
    <property type="entry name" value="4pyrrol_synth_OHMeBilane_synth"/>
    <property type="match status" value="1"/>
</dbReference>
<dbReference type="PRINTS" id="PR00151">
    <property type="entry name" value="PORPHBDMNASE"/>
</dbReference>
<dbReference type="SUPFAM" id="SSF53850">
    <property type="entry name" value="Periplasmic binding protein-like II"/>
    <property type="match status" value="1"/>
</dbReference>
<dbReference type="SUPFAM" id="SSF54782">
    <property type="entry name" value="Porphobilinogen deaminase (hydroxymethylbilane synthase), C-terminal domain"/>
    <property type="match status" value="1"/>
</dbReference>
<dbReference type="PROSITE" id="PS00533">
    <property type="entry name" value="PORPHOBILINOGEN_DEAM"/>
    <property type="match status" value="1"/>
</dbReference>